<reference key="1">
    <citation type="journal article" date="2002" name="J. Bacteriol.">
        <title>Whole-genome comparison of Mycobacterium tuberculosis clinical and laboratory strains.</title>
        <authorList>
            <person name="Fleischmann R.D."/>
            <person name="Alland D."/>
            <person name="Eisen J.A."/>
            <person name="Carpenter L."/>
            <person name="White O."/>
            <person name="Peterson J.D."/>
            <person name="DeBoy R.T."/>
            <person name="Dodson R.J."/>
            <person name="Gwinn M.L."/>
            <person name="Haft D.H."/>
            <person name="Hickey E.K."/>
            <person name="Kolonay J.F."/>
            <person name="Nelson W.C."/>
            <person name="Umayam L.A."/>
            <person name="Ermolaeva M.D."/>
            <person name="Salzberg S.L."/>
            <person name="Delcher A."/>
            <person name="Utterback T.R."/>
            <person name="Weidman J.F."/>
            <person name="Khouri H.M."/>
            <person name="Gill J."/>
            <person name="Mikula A."/>
            <person name="Bishai W."/>
            <person name="Jacobs W.R. Jr."/>
            <person name="Venter J.C."/>
            <person name="Fraser C.M."/>
        </authorList>
    </citation>
    <scope>NUCLEOTIDE SEQUENCE [LARGE SCALE GENOMIC DNA]</scope>
    <source>
        <strain>CDC 1551 / Oshkosh</strain>
    </source>
</reference>
<accession>P9WL96</accession>
<accession>L0TCS6</accession>
<accession>Q50654</accession>
<accession>Q50731</accession>
<name>Y2567_MYCTO</name>
<keyword id="KW-1185">Reference proteome</keyword>
<gene>
    <name type="ordered locus">MT2643</name>
</gene>
<protein>
    <recommendedName>
        <fullName>Uncharacterized protein MT2643</fullName>
    </recommendedName>
</protein>
<sequence length="884" mass="95477">MAPSASAATNGYDVDRLLAGYRTARAQETLFDLRDGPGAGYDEFVDDDGNVRPTWTELADAVAERGKAGLDRLRSVVHSLIDHDGITYTAIDAHRDALTGDHDLEPGPWRLDPLPLVISAADWEVLEAGLVQRSRLLDAILADLYGPRSMLTEGVLPPEMLFAHPGYVRAANGIQMPGRHQLFMHACDLSRLPDGTFQVNADWTQAPSGSGYAMADRRVVAHAVPDLYEELAPRPTTPFAQALRLALIDAAPDVAQDPVVVVLSPGIYSETAFDQAYLATLLGFPLVESADLVVRDGKLWMRSLGTLKRVDVVLRRVDAHYADPLDLRADSRLGVVGLVEAQHRGTVTVVNTLGSGILENPGLLRFLPQLSERLLDESPLLHTAPVYWGGIASERSHLLANVSSLLIKSTVSGETLVGPTLSSAQLADLAVRIEAMPWQWVGQELPQFSSAPTNHAGVLSSAGVGMRLFTVAQRSGYAPMIGGLGYVLAPGPAAYTLKTVAAKDIWVRPTERAHAEVITVPVLAPPAKTGAGTWAVSSPRVLSDLFWMGRYGERAENMARLLIVTRERYHVFRHQQDTDESECVPVLMAALGKITGYDTATGAGSAYDRADMIAVAPSTLWSLTVDPDRPGSLVQSVEGLALAARAVRDQLSNDTWMVLANVERAVEHKSDPPQSLAEADAVLASAQAETLAGMLTLSGVAGESMVHDVGWTMMDIGKRIERGLWLTALLQATLSTVRHPAAEQAIIEATLVACESSVIYRRRTVGKFSVAAVTELMLFDAQNPRSLVYQLERLRADLKDLPGSSGSSRPERMVDEMNTRLRRSHPEELEEVSADGLRAELAELLAGIHASLRDVADVLTATQLALPGGMQPLWGPDQRRVMPA</sequence>
<dbReference type="EMBL" id="AE000516">
    <property type="protein sequence ID" value="AAK46956.1"/>
    <property type="molecule type" value="Genomic_DNA"/>
</dbReference>
<dbReference type="PIR" id="C70729">
    <property type="entry name" value="C70729"/>
</dbReference>
<dbReference type="RefSeq" id="WP_003413330.1">
    <property type="nucleotide sequence ID" value="NZ_KK341227.1"/>
</dbReference>
<dbReference type="SMR" id="P9WL96"/>
<dbReference type="KEGG" id="mtc:MT2643"/>
<dbReference type="PATRIC" id="fig|83331.31.peg.2850"/>
<dbReference type="HOGENOM" id="CLU_013951_0_0_11"/>
<dbReference type="Proteomes" id="UP000001020">
    <property type="component" value="Chromosome"/>
</dbReference>
<dbReference type="FunFam" id="3.40.50.11290:FF:000001">
    <property type="entry name" value="Hypothetical alanine and leucine rich protein"/>
    <property type="match status" value="1"/>
</dbReference>
<dbReference type="Gene3D" id="3.30.1490.270">
    <property type="match status" value="1"/>
</dbReference>
<dbReference type="Gene3D" id="3.40.50.11290">
    <property type="match status" value="1"/>
</dbReference>
<dbReference type="InterPro" id="IPR051680">
    <property type="entry name" value="ATP-dep_Glu-Cys_Ligase-2"/>
</dbReference>
<dbReference type="InterPro" id="IPR007302">
    <property type="entry name" value="CP_ATPgrasp"/>
</dbReference>
<dbReference type="InterPro" id="IPR007296">
    <property type="entry name" value="DUF403"/>
</dbReference>
<dbReference type="PANTHER" id="PTHR34595:SF2">
    <property type="entry name" value="BLR2978 PROTEIN"/>
    <property type="match status" value="1"/>
</dbReference>
<dbReference type="PANTHER" id="PTHR34595">
    <property type="entry name" value="BLR5612 PROTEIN"/>
    <property type="match status" value="1"/>
</dbReference>
<dbReference type="Pfam" id="PF04168">
    <property type="entry name" value="Alpha-E"/>
    <property type="match status" value="1"/>
</dbReference>
<dbReference type="Pfam" id="PF04174">
    <property type="entry name" value="CP_ATPgrasp_1"/>
    <property type="match status" value="1"/>
</dbReference>
<dbReference type="SUPFAM" id="SSF56059">
    <property type="entry name" value="Glutathione synthetase ATP-binding domain-like"/>
    <property type="match status" value="1"/>
</dbReference>
<feature type="chain" id="PRO_0000427517" description="Uncharacterized protein MT2643">
    <location>
        <begin position="1"/>
        <end position="884"/>
    </location>
</feature>
<organism>
    <name type="scientific">Mycobacterium tuberculosis (strain CDC 1551 / Oshkosh)</name>
    <dbReference type="NCBI Taxonomy" id="83331"/>
    <lineage>
        <taxon>Bacteria</taxon>
        <taxon>Bacillati</taxon>
        <taxon>Actinomycetota</taxon>
        <taxon>Actinomycetes</taxon>
        <taxon>Mycobacteriales</taxon>
        <taxon>Mycobacteriaceae</taxon>
        <taxon>Mycobacterium</taxon>
        <taxon>Mycobacterium tuberculosis complex</taxon>
    </lineage>
</organism>
<proteinExistence type="predicted"/>